<feature type="chain" id="PRO_0000160449" description="ATP-dependent Clp protease ATP-binding subunit ClpX">
    <location>
        <begin position="1"/>
        <end position="423"/>
    </location>
</feature>
<feature type="domain" description="ClpX-type ZB" evidence="2">
    <location>
        <begin position="1"/>
        <end position="50"/>
    </location>
</feature>
<feature type="binding site" evidence="2">
    <location>
        <position position="9"/>
    </location>
    <ligand>
        <name>Zn(2+)</name>
        <dbReference type="ChEBI" id="CHEBI:29105"/>
    </ligand>
</feature>
<feature type="binding site" evidence="2">
    <location>
        <position position="12"/>
    </location>
    <ligand>
        <name>Zn(2+)</name>
        <dbReference type="ChEBI" id="CHEBI:29105"/>
    </ligand>
</feature>
<feature type="binding site" evidence="2">
    <location>
        <position position="31"/>
    </location>
    <ligand>
        <name>Zn(2+)</name>
        <dbReference type="ChEBI" id="CHEBI:29105"/>
    </ligand>
</feature>
<feature type="binding site" evidence="2">
    <location>
        <position position="34"/>
    </location>
    <ligand>
        <name>Zn(2+)</name>
        <dbReference type="ChEBI" id="CHEBI:29105"/>
    </ligand>
</feature>
<feature type="binding site" evidence="1">
    <location>
        <begin position="126"/>
        <end position="133"/>
    </location>
    <ligand>
        <name>ATP</name>
        <dbReference type="ChEBI" id="CHEBI:30616"/>
    </ligand>
</feature>
<evidence type="ECO:0000255" key="1">
    <source>
        <dbReference type="HAMAP-Rule" id="MF_00175"/>
    </source>
</evidence>
<evidence type="ECO:0000255" key="2">
    <source>
        <dbReference type="PROSITE-ProRule" id="PRU01250"/>
    </source>
</evidence>
<dbReference type="EMBL" id="BX251410">
    <property type="protein sequence ID" value="CAD66959.1"/>
    <property type="molecule type" value="Genomic_DNA"/>
</dbReference>
<dbReference type="RefSeq" id="WP_011096239.1">
    <property type="nucleotide sequence ID" value="NC_004551.1"/>
</dbReference>
<dbReference type="SMR" id="Q83MI6"/>
<dbReference type="GeneID" id="67388061"/>
<dbReference type="KEGG" id="tws:TW285"/>
<dbReference type="HOGENOM" id="CLU_014218_8_2_11"/>
<dbReference type="GO" id="GO:0009376">
    <property type="term" value="C:HslUV protease complex"/>
    <property type="evidence" value="ECO:0007669"/>
    <property type="project" value="TreeGrafter"/>
</dbReference>
<dbReference type="GO" id="GO:0005524">
    <property type="term" value="F:ATP binding"/>
    <property type="evidence" value="ECO:0007669"/>
    <property type="project" value="UniProtKB-UniRule"/>
</dbReference>
<dbReference type="GO" id="GO:0016887">
    <property type="term" value="F:ATP hydrolysis activity"/>
    <property type="evidence" value="ECO:0007669"/>
    <property type="project" value="InterPro"/>
</dbReference>
<dbReference type="GO" id="GO:0140662">
    <property type="term" value="F:ATP-dependent protein folding chaperone"/>
    <property type="evidence" value="ECO:0007669"/>
    <property type="project" value="InterPro"/>
</dbReference>
<dbReference type="GO" id="GO:0046983">
    <property type="term" value="F:protein dimerization activity"/>
    <property type="evidence" value="ECO:0007669"/>
    <property type="project" value="InterPro"/>
</dbReference>
<dbReference type="GO" id="GO:0051082">
    <property type="term" value="F:unfolded protein binding"/>
    <property type="evidence" value="ECO:0007669"/>
    <property type="project" value="UniProtKB-UniRule"/>
</dbReference>
<dbReference type="GO" id="GO:0008270">
    <property type="term" value="F:zinc ion binding"/>
    <property type="evidence" value="ECO:0007669"/>
    <property type="project" value="InterPro"/>
</dbReference>
<dbReference type="GO" id="GO:0051301">
    <property type="term" value="P:cell division"/>
    <property type="evidence" value="ECO:0007669"/>
    <property type="project" value="TreeGrafter"/>
</dbReference>
<dbReference type="GO" id="GO:0051603">
    <property type="term" value="P:proteolysis involved in protein catabolic process"/>
    <property type="evidence" value="ECO:0007669"/>
    <property type="project" value="TreeGrafter"/>
</dbReference>
<dbReference type="CDD" id="cd19497">
    <property type="entry name" value="RecA-like_ClpX"/>
    <property type="match status" value="1"/>
</dbReference>
<dbReference type="FunFam" id="1.10.8.60:FF:000002">
    <property type="entry name" value="ATP-dependent Clp protease ATP-binding subunit ClpX"/>
    <property type="match status" value="1"/>
</dbReference>
<dbReference type="FunFam" id="3.40.50.300:FF:000005">
    <property type="entry name" value="ATP-dependent Clp protease ATP-binding subunit ClpX"/>
    <property type="match status" value="1"/>
</dbReference>
<dbReference type="Gene3D" id="1.10.8.60">
    <property type="match status" value="1"/>
</dbReference>
<dbReference type="Gene3D" id="6.20.220.10">
    <property type="entry name" value="ClpX chaperone, C4-type zinc finger domain"/>
    <property type="match status" value="1"/>
</dbReference>
<dbReference type="Gene3D" id="3.40.50.300">
    <property type="entry name" value="P-loop containing nucleotide triphosphate hydrolases"/>
    <property type="match status" value="1"/>
</dbReference>
<dbReference type="HAMAP" id="MF_00175">
    <property type="entry name" value="ClpX"/>
    <property type="match status" value="1"/>
</dbReference>
<dbReference type="InterPro" id="IPR003593">
    <property type="entry name" value="AAA+_ATPase"/>
</dbReference>
<dbReference type="InterPro" id="IPR050052">
    <property type="entry name" value="ATP-dep_Clp_protease_ClpX"/>
</dbReference>
<dbReference type="InterPro" id="IPR003959">
    <property type="entry name" value="ATPase_AAA_core"/>
</dbReference>
<dbReference type="InterPro" id="IPR019489">
    <property type="entry name" value="Clp_ATPase_C"/>
</dbReference>
<dbReference type="InterPro" id="IPR004487">
    <property type="entry name" value="Clp_protease_ATP-bd_su_ClpX"/>
</dbReference>
<dbReference type="InterPro" id="IPR046425">
    <property type="entry name" value="ClpX_bact"/>
</dbReference>
<dbReference type="InterPro" id="IPR027417">
    <property type="entry name" value="P-loop_NTPase"/>
</dbReference>
<dbReference type="InterPro" id="IPR010603">
    <property type="entry name" value="Znf_CppX_C4"/>
</dbReference>
<dbReference type="InterPro" id="IPR038366">
    <property type="entry name" value="Znf_CppX_C4_sf"/>
</dbReference>
<dbReference type="NCBIfam" id="TIGR00382">
    <property type="entry name" value="clpX"/>
    <property type="match status" value="1"/>
</dbReference>
<dbReference type="NCBIfam" id="NF003745">
    <property type="entry name" value="PRK05342.1"/>
    <property type="match status" value="1"/>
</dbReference>
<dbReference type="PANTHER" id="PTHR48102:SF7">
    <property type="entry name" value="ATP-DEPENDENT CLP PROTEASE ATP-BINDING SUBUNIT CLPX-LIKE, MITOCHONDRIAL"/>
    <property type="match status" value="1"/>
</dbReference>
<dbReference type="PANTHER" id="PTHR48102">
    <property type="entry name" value="ATP-DEPENDENT CLP PROTEASE ATP-BINDING SUBUNIT CLPX-LIKE, MITOCHONDRIAL-RELATED"/>
    <property type="match status" value="1"/>
</dbReference>
<dbReference type="Pfam" id="PF07724">
    <property type="entry name" value="AAA_2"/>
    <property type="match status" value="1"/>
</dbReference>
<dbReference type="Pfam" id="PF10431">
    <property type="entry name" value="ClpB_D2-small"/>
    <property type="match status" value="1"/>
</dbReference>
<dbReference type="Pfam" id="PF06689">
    <property type="entry name" value="zf-C4_ClpX"/>
    <property type="match status" value="1"/>
</dbReference>
<dbReference type="SMART" id="SM00382">
    <property type="entry name" value="AAA"/>
    <property type="match status" value="1"/>
</dbReference>
<dbReference type="SMART" id="SM01086">
    <property type="entry name" value="ClpB_D2-small"/>
    <property type="match status" value="1"/>
</dbReference>
<dbReference type="SMART" id="SM00994">
    <property type="entry name" value="zf-C4_ClpX"/>
    <property type="match status" value="1"/>
</dbReference>
<dbReference type="SUPFAM" id="SSF57716">
    <property type="entry name" value="Glucocorticoid receptor-like (DNA-binding domain)"/>
    <property type="match status" value="1"/>
</dbReference>
<dbReference type="SUPFAM" id="SSF52540">
    <property type="entry name" value="P-loop containing nucleoside triphosphate hydrolases"/>
    <property type="match status" value="1"/>
</dbReference>
<dbReference type="PROSITE" id="PS51902">
    <property type="entry name" value="CLPX_ZB"/>
    <property type="match status" value="1"/>
</dbReference>
<gene>
    <name evidence="1" type="primary">clpX</name>
    <name type="ordered locus">TW285</name>
</gene>
<accession>Q83MI6</accession>
<protein>
    <recommendedName>
        <fullName evidence="1">ATP-dependent Clp protease ATP-binding subunit ClpX</fullName>
    </recommendedName>
</protein>
<proteinExistence type="inferred from homology"/>
<reference key="1">
    <citation type="journal article" date="2003" name="Lancet">
        <title>Sequencing and analysis of the genome of the Whipple's disease bacterium Tropheryma whipplei.</title>
        <authorList>
            <person name="Bentley S.D."/>
            <person name="Maiwald M."/>
            <person name="Murphy L.D."/>
            <person name="Pallen M.J."/>
            <person name="Yeats C.A."/>
            <person name="Dover L.G."/>
            <person name="Norbertczak H.T."/>
            <person name="Besra G.S."/>
            <person name="Quail M.A."/>
            <person name="Harris D.E."/>
            <person name="von Herbay A."/>
            <person name="Goble A."/>
            <person name="Rutter S."/>
            <person name="Squares R."/>
            <person name="Squares S."/>
            <person name="Barrell B.G."/>
            <person name="Parkhill J."/>
            <person name="Relman D.A."/>
        </authorList>
    </citation>
    <scope>NUCLEOTIDE SEQUENCE [LARGE SCALE GENOMIC DNA]</scope>
    <source>
        <strain>TW08/27</strain>
    </source>
</reference>
<comment type="function">
    <text evidence="1">ATP-dependent specificity component of the Clp protease. It directs the protease to specific substrates. Can perform chaperone functions in the absence of ClpP.</text>
</comment>
<comment type="subunit">
    <text evidence="1">Component of the ClpX-ClpP complex. Forms a hexameric ring that, in the presence of ATP, binds to fourteen ClpP subunits assembled into a disk-like structure with a central cavity, resembling the structure of eukaryotic proteasomes.</text>
</comment>
<comment type="similarity">
    <text evidence="1">Belongs to the ClpX chaperone family.</text>
</comment>
<name>CLPX_TROW8</name>
<keyword id="KW-0067">ATP-binding</keyword>
<keyword id="KW-0143">Chaperone</keyword>
<keyword id="KW-0479">Metal-binding</keyword>
<keyword id="KW-0547">Nucleotide-binding</keyword>
<keyword id="KW-0862">Zinc</keyword>
<sequence>MTDDTEYRCSFCGKEHHQVDDLIAGPDVRICSECVVLSCEIVEDRRNEALAKQDAFIKRKQRSVLEGLPKPAEIYAFLDEYVIGQQKAKRDLSVAVYNHYKRLVSTKSESENEVELSKSNILLIGPTGCGKTYLAQTLARMLRVPFAVADATALTEAGYVGDDVENVLLKLLQDADFDITRAEAGIVCIDEIDKISRKADSPSITRDVSGEGVQQALLKILEGTAASVPLQGGKKHTQYEQASINTRNILFIVAGAFSGIEEIISSRIGRSNMGFGSDLLRKDTDVFDQILPEDLRKFGLIPEFIGRLPIVTAISHLDGEDMIRVLTEPKNALVKQYKRLFSLDGVSLGFDHEALEAIVELALKRKTGARALRSVMESILSPIMFDVPSRGDIESVRITAETVAGGGPHLTMRCARSNYIRSA</sequence>
<organism>
    <name type="scientific">Tropheryma whipplei (strain TW08/27)</name>
    <name type="common">Whipple's bacillus</name>
    <dbReference type="NCBI Taxonomy" id="218496"/>
    <lineage>
        <taxon>Bacteria</taxon>
        <taxon>Bacillati</taxon>
        <taxon>Actinomycetota</taxon>
        <taxon>Actinomycetes</taxon>
        <taxon>Micrococcales</taxon>
        <taxon>Tropherymataceae</taxon>
        <taxon>Tropheryma</taxon>
    </lineage>
</organism>